<name>THIO_NEUCR</name>
<evidence type="ECO:0000250" key="1"/>
<evidence type="ECO:0000255" key="2">
    <source>
        <dbReference type="PROSITE-ProRule" id="PRU00691"/>
    </source>
</evidence>
<evidence type="ECO:0000305" key="3"/>
<proteinExistence type="inferred from homology"/>
<dbReference type="EMBL" id="D45892">
    <property type="protein sequence ID" value="BAA08305.1"/>
    <property type="molecule type" value="Genomic_DNA"/>
</dbReference>
<dbReference type="EMBL" id="CM002238">
    <property type="protein sequence ID" value="EAA33651.1"/>
    <property type="molecule type" value="Genomic_DNA"/>
</dbReference>
<dbReference type="RefSeq" id="XP_962887.1">
    <property type="nucleotide sequence ID" value="XM_957794.2"/>
</dbReference>
<dbReference type="SMR" id="P42115"/>
<dbReference type="STRING" id="367110.P42115"/>
<dbReference type="PaxDb" id="5141-EFNCRP00000007648"/>
<dbReference type="EnsemblFungi" id="EAA33651">
    <property type="protein sequence ID" value="EAA33651"/>
    <property type="gene ID" value="NCU05731"/>
</dbReference>
<dbReference type="GeneID" id="3879037"/>
<dbReference type="KEGG" id="ncr:NCU05731"/>
<dbReference type="VEuPathDB" id="FungiDB:NCU05731"/>
<dbReference type="HOGENOM" id="CLU_090389_14_0_1"/>
<dbReference type="InParanoid" id="P42115"/>
<dbReference type="OMA" id="RIICCYG"/>
<dbReference type="OrthoDB" id="19690at2759"/>
<dbReference type="Proteomes" id="UP000001805">
    <property type="component" value="Chromosome 3, Linkage Group III"/>
</dbReference>
<dbReference type="CDD" id="cd02947">
    <property type="entry name" value="TRX_family"/>
    <property type="match status" value="1"/>
</dbReference>
<dbReference type="Gene3D" id="3.40.30.10">
    <property type="entry name" value="Glutaredoxin"/>
    <property type="match status" value="1"/>
</dbReference>
<dbReference type="InterPro" id="IPR036249">
    <property type="entry name" value="Thioredoxin-like_sf"/>
</dbReference>
<dbReference type="InterPro" id="IPR017937">
    <property type="entry name" value="Thioredoxin_CS"/>
</dbReference>
<dbReference type="InterPro" id="IPR013766">
    <property type="entry name" value="Thioredoxin_domain"/>
</dbReference>
<dbReference type="PANTHER" id="PTHR46115">
    <property type="entry name" value="THIOREDOXIN-LIKE PROTEIN 1"/>
    <property type="match status" value="1"/>
</dbReference>
<dbReference type="Pfam" id="PF00085">
    <property type="entry name" value="Thioredoxin"/>
    <property type="match status" value="1"/>
</dbReference>
<dbReference type="PRINTS" id="PR00421">
    <property type="entry name" value="THIOREDOXIN"/>
</dbReference>
<dbReference type="SUPFAM" id="SSF52833">
    <property type="entry name" value="Thioredoxin-like"/>
    <property type="match status" value="1"/>
</dbReference>
<dbReference type="PROSITE" id="PS00194">
    <property type="entry name" value="THIOREDOXIN_1"/>
    <property type="match status" value="1"/>
</dbReference>
<dbReference type="PROSITE" id="PS51352">
    <property type="entry name" value="THIOREDOXIN_2"/>
    <property type="match status" value="1"/>
</dbReference>
<comment type="function">
    <text>Participates in various redox reactions through the reversible oxidation of its active center dithiol to a disulfide and catalyzes dithiol-disulfide exchange reactions.</text>
</comment>
<comment type="similarity">
    <text evidence="3">Belongs to the thioredoxin family.</text>
</comment>
<keyword id="KW-1015">Disulfide bond</keyword>
<keyword id="KW-0249">Electron transport</keyword>
<keyword id="KW-0676">Redox-active center</keyword>
<keyword id="KW-1185">Reference proteome</keyword>
<keyword id="KW-0813">Transport</keyword>
<gene>
    <name type="primary">trx</name>
    <name type="ORF">NCU05731</name>
</gene>
<accession>P42115</accession>
<accession>Q7SB81</accession>
<sequence>MSDGVKHINSAQEFANLLNTTQYVVADFYADWCGPCKAIAPMYAQFAKTFSIPNFLAFAKINVDSVQQVAQHYRVSAMPTFLFFKNGKQVAVNGSVMIQGADVNSLRAAAEKMGRLAKEKAAAAGSS</sequence>
<feature type="chain" id="PRO_0000120041" description="Thioredoxin">
    <location>
        <begin position="1"/>
        <end position="127"/>
    </location>
</feature>
<feature type="domain" description="Thioredoxin" evidence="2">
    <location>
        <begin position="2"/>
        <end position="115"/>
    </location>
</feature>
<feature type="active site" description="Nucleophile" evidence="1">
    <location>
        <position position="33"/>
    </location>
</feature>
<feature type="active site" description="Nucleophile" evidence="1">
    <location>
        <position position="36"/>
    </location>
</feature>
<feature type="site" description="Deprotonates C-terminal active site Cys" evidence="1">
    <location>
        <position position="27"/>
    </location>
</feature>
<feature type="site" description="Contributes to redox potential value" evidence="1">
    <location>
        <position position="34"/>
    </location>
</feature>
<feature type="site" description="Contributes to redox potential value" evidence="1">
    <location>
        <position position="35"/>
    </location>
</feature>
<feature type="disulfide bond" description="Redox-active" evidence="2">
    <location>
        <begin position="33"/>
        <end position="36"/>
    </location>
</feature>
<organism>
    <name type="scientific">Neurospora crassa (strain ATCC 24698 / 74-OR23-1A / CBS 708.71 / DSM 1257 / FGSC 987)</name>
    <dbReference type="NCBI Taxonomy" id="367110"/>
    <lineage>
        <taxon>Eukaryota</taxon>
        <taxon>Fungi</taxon>
        <taxon>Dikarya</taxon>
        <taxon>Ascomycota</taxon>
        <taxon>Pezizomycotina</taxon>
        <taxon>Sordariomycetes</taxon>
        <taxon>Sordariomycetidae</taxon>
        <taxon>Sordariales</taxon>
        <taxon>Sordariaceae</taxon>
        <taxon>Neurospora</taxon>
    </lineage>
</organism>
<reference key="1">
    <citation type="submission" date="1995-02" db="EMBL/GenBank/DDBJ databases">
        <title>Cloning and characterization of the trx gene of Neurospora crassa.</title>
        <authorList>
            <person name="Akiyama M."/>
            <person name="Nakashima H."/>
        </authorList>
    </citation>
    <scope>NUCLEOTIDE SEQUENCE [GENOMIC DNA]</scope>
</reference>
<reference key="2">
    <citation type="journal article" date="2003" name="Nature">
        <title>The genome sequence of the filamentous fungus Neurospora crassa.</title>
        <authorList>
            <person name="Galagan J.E."/>
            <person name="Calvo S.E."/>
            <person name="Borkovich K.A."/>
            <person name="Selker E.U."/>
            <person name="Read N.D."/>
            <person name="Jaffe D.B."/>
            <person name="FitzHugh W."/>
            <person name="Ma L.-J."/>
            <person name="Smirnov S."/>
            <person name="Purcell S."/>
            <person name="Rehman B."/>
            <person name="Elkins T."/>
            <person name="Engels R."/>
            <person name="Wang S."/>
            <person name="Nielsen C.B."/>
            <person name="Butler J."/>
            <person name="Endrizzi M."/>
            <person name="Qui D."/>
            <person name="Ianakiev P."/>
            <person name="Bell-Pedersen D."/>
            <person name="Nelson M.A."/>
            <person name="Werner-Washburne M."/>
            <person name="Selitrennikoff C.P."/>
            <person name="Kinsey J.A."/>
            <person name="Braun E.L."/>
            <person name="Zelter A."/>
            <person name="Schulte U."/>
            <person name="Kothe G.O."/>
            <person name="Jedd G."/>
            <person name="Mewes H.-W."/>
            <person name="Staben C."/>
            <person name="Marcotte E."/>
            <person name="Greenberg D."/>
            <person name="Roy A."/>
            <person name="Foley K."/>
            <person name="Naylor J."/>
            <person name="Stange-Thomann N."/>
            <person name="Barrett R."/>
            <person name="Gnerre S."/>
            <person name="Kamal M."/>
            <person name="Kamvysselis M."/>
            <person name="Mauceli E.W."/>
            <person name="Bielke C."/>
            <person name="Rudd S."/>
            <person name="Frishman D."/>
            <person name="Krystofova S."/>
            <person name="Rasmussen C."/>
            <person name="Metzenberg R.L."/>
            <person name="Perkins D.D."/>
            <person name="Kroken S."/>
            <person name="Cogoni C."/>
            <person name="Macino G."/>
            <person name="Catcheside D.E.A."/>
            <person name="Li W."/>
            <person name="Pratt R.J."/>
            <person name="Osmani S.A."/>
            <person name="DeSouza C.P.C."/>
            <person name="Glass N.L."/>
            <person name="Orbach M.J."/>
            <person name="Berglund J.A."/>
            <person name="Voelker R."/>
            <person name="Yarden O."/>
            <person name="Plamann M."/>
            <person name="Seiler S."/>
            <person name="Dunlap J.C."/>
            <person name="Radford A."/>
            <person name="Aramayo R."/>
            <person name="Natvig D.O."/>
            <person name="Alex L.A."/>
            <person name="Mannhaupt G."/>
            <person name="Ebbole D.J."/>
            <person name="Freitag M."/>
            <person name="Paulsen I."/>
            <person name="Sachs M.S."/>
            <person name="Lander E.S."/>
            <person name="Nusbaum C."/>
            <person name="Birren B.W."/>
        </authorList>
    </citation>
    <scope>NUCLEOTIDE SEQUENCE [LARGE SCALE GENOMIC DNA]</scope>
    <source>
        <strain>ATCC 24698 / 74-OR23-1A / CBS 708.71 / DSM 1257 / FGSC 987</strain>
    </source>
</reference>
<protein>
    <recommendedName>
        <fullName>Thioredoxin</fullName>
        <shortName>Trx</shortName>
    </recommendedName>
</protein>